<organism>
    <name type="scientific">Dinoroseobacter shibae (strain DSM 16493 / NCIMB 14021 / DFL 12)</name>
    <dbReference type="NCBI Taxonomy" id="398580"/>
    <lineage>
        <taxon>Bacteria</taxon>
        <taxon>Pseudomonadati</taxon>
        <taxon>Pseudomonadota</taxon>
        <taxon>Alphaproteobacteria</taxon>
        <taxon>Rhodobacterales</taxon>
        <taxon>Roseobacteraceae</taxon>
        <taxon>Dinoroseobacter</taxon>
    </lineage>
</organism>
<sequence>MTESTDKTTHFGYQTVREDDKAGLVQGVFTNVASKYDIMNDLMSGGLHRVWKDAMMDWLAPRAAQRLLDVAGGTGDIAFRFLKRAPEAEAVVLDLTESMLIAGRQRAEAEALDARLNWLVGDAMALPFADNSFDVYTISFGIRNVTRIPDALAEAYRVLRPGGRLMVLEFSQLPNPGLQKAYDLYSFNVIPPMGKVVTNDRDSYQYLVESIRRFPDQESFASMIRTAGFDQVKYRNLTFGVAALHSGWKL</sequence>
<accession>A8LNK7</accession>
<gene>
    <name evidence="1" type="primary">ubiE</name>
    <name type="ordered locus">Dshi_3368</name>
</gene>
<evidence type="ECO:0000255" key="1">
    <source>
        <dbReference type="HAMAP-Rule" id="MF_01813"/>
    </source>
</evidence>
<keyword id="KW-0474">Menaquinone biosynthesis</keyword>
<keyword id="KW-0489">Methyltransferase</keyword>
<keyword id="KW-1185">Reference proteome</keyword>
<keyword id="KW-0949">S-adenosyl-L-methionine</keyword>
<keyword id="KW-0808">Transferase</keyword>
<keyword id="KW-0831">Ubiquinone biosynthesis</keyword>
<protein>
    <recommendedName>
        <fullName evidence="1">Ubiquinone/menaquinone biosynthesis C-methyltransferase UbiE</fullName>
        <ecNumber evidence="1">2.1.1.163</ecNumber>
        <ecNumber evidence="1">2.1.1.201</ecNumber>
    </recommendedName>
    <alternativeName>
        <fullName evidence="1">2-methoxy-6-polyprenyl-1,4-benzoquinol methylase</fullName>
    </alternativeName>
    <alternativeName>
        <fullName evidence="1">Demethylmenaquinone methyltransferase</fullName>
    </alternativeName>
</protein>
<proteinExistence type="inferred from homology"/>
<reference key="1">
    <citation type="journal article" date="2010" name="ISME J.">
        <title>The complete genome sequence of the algal symbiont Dinoroseobacter shibae: a hitchhiker's guide to life in the sea.</title>
        <authorList>
            <person name="Wagner-Dobler I."/>
            <person name="Ballhausen B."/>
            <person name="Berger M."/>
            <person name="Brinkhoff T."/>
            <person name="Buchholz I."/>
            <person name="Bunk B."/>
            <person name="Cypionka H."/>
            <person name="Daniel R."/>
            <person name="Drepper T."/>
            <person name="Gerdts G."/>
            <person name="Hahnke S."/>
            <person name="Han C."/>
            <person name="Jahn D."/>
            <person name="Kalhoefer D."/>
            <person name="Kiss H."/>
            <person name="Klenk H.P."/>
            <person name="Kyrpides N."/>
            <person name="Liebl W."/>
            <person name="Liesegang H."/>
            <person name="Meincke L."/>
            <person name="Pati A."/>
            <person name="Petersen J."/>
            <person name="Piekarski T."/>
            <person name="Pommerenke C."/>
            <person name="Pradella S."/>
            <person name="Pukall R."/>
            <person name="Rabus R."/>
            <person name="Stackebrandt E."/>
            <person name="Thole S."/>
            <person name="Thompson L."/>
            <person name="Tielen P."/>
            <person name="Tomasch J."/>
            <person name="von Jan M."/>
            <person name="Wanphrut N."/>
            <person name="Wichels A."/>
            <person name="Zech H."/>
            <person name="Simon M."/>
        </authorList>
    </citation>
    <scope>NUCLEOTIDE SEQUENCE [LARGE SCALE GENOMIC DNA]</scope>
    <source>
        <strain>DSM 16493 / NCIMB 14021 / DFL 12</strain>
    </source>
</reference>
<feature type="chain" id="PRO_1000187753" description="Ubiquinone/menaquinone biosynthesis C-methyltransferase UbiE">
    <location>
        <begin position="1"/>
        <end position="250"/>
    </location>
</feature>
<feature type="binding site" evidence="1">
    <location>
        <position position="74"/>
    </location>
    <ligand>
        <name>S-adenosyl-L-methionine</name>
        <dbReference type="ChEBI" id="CHEBI:59789"/>
    </ligand>
</feature>
<feature type="binding site" evidence="1">
    <location>
        <position position="94"/>
    </location>
    <ligand>
        <name>S-adenosyl-L-methionine</name>
        <dbReference type="ChEBI" id="CHEBI:59789"/>
    </ligand>
</feature>
<feature type="binding site" evidence="1">
    <location>
        <begin position="122"/>
        <end position="123"/>
    </location>
    <ligand>
        <name>S-adenosyl-L-methionine</name>
        <dbReference type="ChEBI" id="CHEBI:59789"/>
    </ligand>
</feature>
<feature type="binding site" evidence="1">
    <location>
        <position position="139"/>
    </location>
    <ligand>
        <name>S-adenosyl-L-methionine</name>
        <dbReference type="ChEBI" id="CHEBI:59789"/>
    </ligand>
</feature>
<name>UBIE_DINSH</name>
<dbReference type="EC" id="2.1.1.163" evidence="1"/>
<dbReference type="EC" id="2.1.1.201" evidence="1"/>
<dbReference type="EMBL" id="CP000830">
    <property type="protein sequence ID" value="ABV95101.1"/>
    <property type="molecule type" value="Genomic_DNA"/>
</dbReference>
<dbReference type="RefSeq" id="WP_012180027.1">
    <property type="nucleotide sequence ID" value="NC_009952.1"/>
</dbReference>
<dbReference type="SMR" id="A8LNK7"/>
<dbReference type="STRING" id="398580.Dshi_3368"/>
<dbReference type="KEGG" id="dsh:Dshi_3368"/>
<dbReference type="eggNOG" id="COG2226">
    <property type="taxonomic scope" value="Bacteria"/>
</dbReference>
<dbReference type="HOGENOM" id="CLU_037990_0_0_5"/>
<dbReference type="OrthoDB" id="9808140at2"/>
<dbReference type="UniPathway" id="UPA00079">
    <property type="reaction ID" value="UER00169"/>
</dbReference>
<dbReference type="UniPathway" id="UPA00232"/>
<dbReference type="Proteomes" id="UP000006833">
    <property type="component" value="Chromosome"/>
</dbReference>
<dbReference type="GO" id="GO:0008425">
    <property type="term" value="F:2-methoxy-6-polyprenyl-1,4-benzoquinol methyltransferase activity"/>
    <property type="evidence" value="ECO:0007669"/>
    <property type="project" value="UniProtKB-UniRule"/>
</dbReference>
<dbReference type="GO" id="GO:0043770">
    <property type="term" value="F:demethylmenaquinone methyltransferase activity"/>
    <property type="evidence" value="ECO:0007669"/>
    <property type="project" value="UniProtKB-UniRule"/>
</dbReference>
<dbReference type="GO" id="GO:0009060">
    <property type="term" value="P:aerobic respiration"/>
    <property type="evidence" value="ECO:0007669"/>
    <property type="project" value="UniProtKB-UniRule"/>
</dbReference>
<dbReference type="GO" id="GO:0009234">
    <property type="term" value="P:menaquinone biosynthetic process"/>
    <property type="evidence" value="ECO:0007669"/>
    <property type="project" value="UniProtKB-UniRule"/>
</dbReference>
<dbReference type="GO" id="GO:0032259">
    <property type="term" value="P:methylation"/>
    <property type="evidence" value="ECO:0007669"/>
    <property type="project" value="UniProtKB-KW"/>
</dbReference>
<dbReference type="CDD" id="cd02440">
    <property type="entry name" value="AdoMet_MTases"/>
    <property type="match status" value="1"/>
</dbReference>
<dbReference type="FunFam" id="3.40.50.150:FF:000064">
    <property type="entry name" value="2-methoxy-6-polyprenyl-1,4-benzoquinol methylase, mitochondrial"/>
    <property type="match status" value="1"/>
</dbReference>
<dbReference type="Gene3D" id="3.40.50.150">
    <property type="entry name" value="Vaccinia Virus protein VP39"/>
    <property type="match status" value="1"/>
</dbReference>
<dbReference type="HAMAP" id="MF_01813">
    <property type="entry name" value="MenG_UbiE_methyltr"/>
    <property type="match status" value="1"/>
</dbReference>
<dbReference type="InterPro" id="IPR029063">
    <property type="entry name" value="SAM-dependent_MTases_sf"/>
</dbReference>
<dbReference type="InterPro" id="IPR004033">
    <property type="entry name" value="UbiE/COQ5_MeTrFase"/>
</dbReference>
<dbReference type="InterPro" id="IPR023576">
    <property type="entry name" value="UbiE/COQ5_MeTrFase_CS"/>
</dbReference>
<dbReference type="NCBIfam" id="TIGR01934">
    <property type="entry name" value="MenG_MenH_UbiE"/>
    <property type="match status" value="1"/>
</dbReference>
<dbReference type="NCBIfam" id="NF001242">
    <property type="entry name" value="PRK00216.1-3"/>
    <property type="match status" value="1"/>
</dbReference>
<dbReference type="NCBIfam" id="NF001244">
    <property type="entry name" value="PRK00216.1-5"/>
    <property type="match status" value="1"/>
</dbReference>
<dbReference type="PANTHER" id="PTHR43591:SF24">
    <property type="entry name" value="2-METHOXY-6-POLYPRENYL-1,4-BENZOQUINOL METHYLASE, MITOCHONDRIAL"/>
    <property type="match status" value="1"/>
</dbReference>
<dbReference type="PANTHER" id="PTHR43591">
    <property type="entry name" value="METHYLTRANSFERASE"/>
    <property type="match status" value="1"/>
</dbReference>
<dbReference type="Pfam" id="PF01209">
    <property type="entry name" value="Ubie_methyltran"/>
    <property type="match status" value="1"/>
</dbReference>
<dbReference type="SUPFAM" id="SSF53335">
    <property type="entry name" value="S-adenosyl-L-methionine-dependent methyltransferases"/>
    <property type="match status" value="1"/>
</dbReference>
<dbReference type="PROSITE" id="PS51608">
    <property type="entry name" value="SAM_MT_UBIE"/>
    <property type="match status" value="1"/>
</dbReference>
<dbReference type="PROSITE" id="PS01183">
    <property type="entry name" value="UBIE_1"/>
    <property type="match status" value="1"/>
</dbReference>
<dbReference type="PROSITE" id="PS01184">
    <property type="entry name" value="UBIE_2"/>
    <property type="match status" value="1"/>
</dbReference>
<comment type="function">
    <text evidence="1">Methyltransferase required for the conversion of demethylmenaquinol (DMKH2) to menaquinol (MKH2) and the conversion of 2-polyprenyl-6-methoxy-1,4-benzoquinol (DDMQH2) to 2-polyprenyl-3-methyl-6-methoxy-1,4-benzoquinol (DMQH2).</text>
</comment>
<comment type="catalytic activity">
    <reaction evidence="1">
        <text>a 2-demethylmenaquinol + S-adenosyl-L-methionine = a menaquinol + S-adenosyl-L-homocysteine + H(+)</text>
        <dbReference type="Rhea" id="RHEA:42640"/>
        <dbReference type="Rhea" id="RHEA-COMP:9539"/>
        <dbReference type="Rhea" id="RHEA-COMP:9563"/>
        <dbReference type="ChEBI" id="CHEBI:15378"/>
        <dbReference type="ChEBI" id="CHEBI:18151"/>
        <dbReference type="ChEBI" id="CHEBI:55437"/>
        <dbReference type="ChEBI" id="CHEBI:57856"/>
        <dbReference type="ChEBI" id="CHEBI:59789"/>
        <dbReference type="EC" id="2.1.1.163"/>
    </reaction>
</comment>
<comment type="catalytic activity">
    <reaction evidence="1">
        <text>a 2-methoxy-6-(all-trans-polyprenyl)benzene-1,4-diol + S-adenosyl-L-methionine = a 5-methoxy-2-methyl-3-(all-trans-polyprenyl)benzene-1,4-diol + S-adenosyl-L-homocysteine + H(+)</text>
        <dbReference type="Rhea" id="RHEA:28286"/>
        <dbReference type="Rhea" id="RHEA-COMP:10858"/>
        <dbReference type="Rhea" id="RHEA-COMP:10859"/>
        <dbReference type="ChEBI" id="CHEBI:15378"/>
        <dbReference type="ChEBI" id="CHEBI:57856"/>
        <dbReference type="ChEBI" id="CHEBI:59789"/>
        <dbReference type="ChEBI" id="CHEBI:84166"/>
        <dbReference type="ChEBI" id="CHEBI:84167"/>
        <dbReference type="EC" id="2.1.1.201"/>
    </reaction>
</comment>
<comment type="pathway">
    <text evidence="1">Quinol/quinone metabolism; menaquinone biosynthesis; menaquinol from 1,4-dihydroxy-2-naphthoate: step 2/2.</text>
</comment>
<comment type="pathway">
    <text evidence="1">Cofactor biosynthesis; ubiquinone biosynthesis.</text>
</comment>
<comment type="similarity">
    <text evidence="1">Belongs to the class I-like SAM-binding methyltransferase superfamily. MenG/UbiE family.</text>
</comment>